<dbReference type="EC" id="6.3.2.6" evidence="1"/>
<dbReference type="EMBL" id="BA000004">
    <property type="protein sequence ID" value="BAB04345.1"/>
    <property type="molecule type" value="Genomic_DNA"/>
</dbReference>
<dbReference type="PIR" id="B83728">
    <property type="entry name" value="B83728"/>
</dbReference>
<dbReference type="RefSeq" id="WP_010896802.1">
    <property type="nucleotide sequence ID" value="NC_002570.2"/>
</dbReference>
<dbReference type="SMR" id="Q9KF60"/>
<dbReference type="STRING" id="272558.gene:10726500"/>
<dbReference type="GeneID" id="87596198"/>
<dbReference type="KEGG" id="bha:BH0626"/>
<dbReference type="eggNOG" id="COG0152">
    <property type="taxonomic scope" value="Bacteria"/>
</dbReference>
<dbReference type="HOGENOM" id="CLU_061495_2_0_9"/>
<dbReference type="OrthoDB" id="9801549at2"/>
<dbReference type="UniPathway" id="UPA00074">
    <property type="reaction ID" value="UER00131"/>
</dbReference>
<dbReference type="Proteomes" id="UP000001258">
    <property type="component" value="Chromosome"/>
</dbReference>
<dbReference type="GO" id="GO:0005524">
    <property type="term" value="F:ATP binding"/>
    <property type="evidence" value="ECO:0007669"/>
    <property type="project" value="UniProtKB-KW"/>
</dbReference>
<dbReference type="GO" id="GO:0004639">
    <property type="term" value="F:phosphoribosylaminoimidazolesuccinocarboxamide synthase activity"/>
    <property type="evidence" value="ECO:0007669"/>
    <property type="project" value="UniProtKB-UniRule"/>
</dbReference>
<dbReference type="GO" id="GO:0006189">
    <property type="term" value="P:'de novo' IMP biosynthetic process"/>
    <property type="evidence" value="ECO:0007669"/>
    <property type="project" value="UniProtKB-UniRule"/>
</dbReference>
<dbReference type="GO" id="GO:0009236">
    <property type="term" value="P:cobalamin biosynthetic process"/>
    <property type="evidence" value="ECO:0007669"/>
    <property type="project" value="InterPro"/>
</dbReference>
<dbReference type="CDD" id="cd01415">
    <property type="entry name" value="SAICAR_synt_PurC"/>
    <property type="match status" value="1"/>
</dbReference>
<dbReference type="FunFam" id="3.30.200.20:FF:000189">
    <property type="entry name" value="Phosphoribosylaminoimidazole-succinocarboxamide synthase"/>
    <property type="match status" value="1"/>
</dbReference>
<dbReference type="FunFam" id="3.30.470.20:FF:000006">
    <property type="entry name" value="Phosphoribosylaminoimidazole-succinocarboxamide synthase"/>
    <property type="match status" value="1"/>
</dbReference>
<dbReference type="Gene3D" id="3.30.470.20">
    <property type="entry name" value="ATP-grasp fold, B domain"/>
    <property type="match status" value="1"/>
</dbReference>
<dbReference type="Gene3D" id="3.30.200.20">
    <property type="entry name" value="Phosphorylase Kinase, domain 1"/>
    <property type="match status" value="1"/>
</dbReference>
<dbReference type="HAMAP" id="MF_00137">
    <property type="entry name" value="SAICAR_synth"/>
    <property type="match status" value="1"/>
</dbReference>
<dbReference type="InterPro" id="IPR028923">
    <property type="entry name" value="SAICAR_synt/ADE2_N"/>
</dbReference>
<dbReference type="InterPro" id="IPR033934">
    <property type="entry name" value="SAICAR_synt_PurC"/>
</dbReference>
<dbReference type="InterPro" id="IPR001636">
    <property type="entry name" value="SAICAR_synth"/>
</dbReference>
<dbReference type="InterPro" id="IPR050089">
    <property type="entry name" value="SAICAR_synthetase"/>
</dbReference>
<dbReference type="InterPro" id="IPR018236">
    <property type="entry name" value="SAICAR_synthetase_CS"/>
</dbReference>
<dbReference type="NCBIfam" id="TIGR00081">
    <property type="entry name" value="purC"/>
    <property type="match status" value="1"/>
</dbReference>
<dbReference type="PANTHER" id="PTHR43599">
    <property type="entry name" value="MULTIFUNCTIONAL PROTEIN ADE2"/>
    <property type="match status" value="1"/>
</dbReference>
<dbReference type="PANTHER" id="PTHR43599:SF3">
    <property type="entry name" value="SI:DKEY-6E2.2"/>
    <property type="match status" value="1"/>
</dbReference>
<dbReference type="Pfam" id="PF01259">
    <property type="entry name" value="SAICAR_synt"/>
    <property type="match status" value="1"/>
</dbReference>
<dbReference type="SUPFAM" id="SSF56104">
    <property type="entry name" value="SAICAR synthase-like"/>
    <property type="match status" value="1"/>
</dbReference>
<dbReference type="PROSITE" id="PS01057">
    <property type="entry name" value="SAICAR_SYNTHETASE_1"/>
    <property type="match status" value="1"/>
</dbReference>
<dbReference type="PROSITE" id="PS01058">
    <property type="entry name" value="SAICAR_SYNTHETASE_2"/>
    <property type="match status" value="1"/>
</dbReference>
<gene>
    <name evidence="1" type="primary">purC</name>
    <name type="ordered locus">BH0626</name>
</gene>
<proteinExistence type="inferred from homology"/>
<sequence>MEKHDLLYEGKAKKIYRTDEEGLLWVEYKNSATAFNGEKKASIEGKARLNNEISSLIFSYLKEQGVDSHFVKRLSETEQLIHQVTIIPLEVVVRNVIAGSLAKRIGIEEGTPLEKPLVEFYYKDDDLGDPLVTEDHIAILQAATKEQVDILKVKAIEVNDALTTFFAGIGVKLVDFKLEFGVTADGAILLADEISPDTCRLWDAKTGERFDKDLFRRNLGNLQDGYEQILTRIEQKA</sequence>
<keyword id="KW-0067">ATP-binding</keyword>
<keyword id="KW-0436">Ligase</keyword>
<keyword id="KW-0547">Nucleotide-binding</keyword>
<keyword id="KW-0658">Purine biosynthesis</keyword>
<keyword id="KW-1185">Reference proteome</keyword>
<organism>
    <name type="scientific">Halalkalibacterium halodurans (strain ATCC BAA-125 / DSM 18197 / FERM 7344 / JCM 9153 / C-125)</name>
    <name type="common">Bacillus halodurans</name>
    <dbReference type="NCBI Taxonomy" id="272558"/>
    <lineage>
        <taxon>Bacteria</taxon>
        <taxon>Bacillati</taxon>
        <taxon>Bacillota</taxon>
        <taxon>Bacilli</taxon>
        <taxon>Bacillales</taxon>
        <taxon>Bacillaceae</taxon>
        <taxon>Halalkalibacterium (ex Joshi et al. 2022)</taxon>
    </lineage>
</organism>
<name>PUR7_HALH5</name>
<evidence type="ECO:0000255" key="1">
    <source>
        <dbReference type="HAMAP-Rule" id="MF_00137"/>
    </source>
</evidence>
<comment type="catalytic activity">
    <reaction evidence="1">
        <text>5-amino-1-(5-phospho-D-ribosyl)imidazole-4-carboxylate + L-aspartate + ATP = (2S)-2-[5-amino-1-(5-phospho-beta-D-ribosyl)imidazole-4-carboxamido]succinate + ADP + phosphate + 2 H(+)</text>
        <dbReference type="Rhea" id="RHEA:22628"/>
        <dbReference type="ChEBI" id="CHEBI:15378"/>
        <dbReference type="ChEBI" id="CHEBI:29991"/>
        <dbReference type="ChEBI" id="CHEBI:30616"/>
        <dbReference type="ChEBI" id="CHEBI:43474"/>
        <dbReference type="ChEBI" id="CHEBI:58443"/>
        <dbReference type="ChEBI" id="CHEBI:77657"/>
        <dbReference type="ChEBI" id="CHEBI:456216"/>
        <dbReference type="EC" id="6.3.2.6"/>
    </reaction>
</comment>
<comment type="pathway">
    <text evidence="1">Purine metabolism; IMP biosynthesis via de novo pathway; 5-amino-1-(5-phospho-D-ribosyl)imidazole-4-carboxamide from 5-amino-1-(5-phospho-D-ribosyl)imidazole-4-carboxylate: step 1/2.</text>
</comment>
<comment type="similarity">
    <text evidence="1">Belongs to the SAICAR synthetase family.</text>
</comment>
<protein>
    <recommendedName>
        <fullName evidence="1">Phosphoribosylaminoimidazole-succinocarboxamide synthase</fullName>
        <ecNumber evidence="1">6.3.2.6</ecNumber>
    </recommendedName>
    <alternativeName>
        <fullName evidence="1">SAICAR synthetase</fullName>
    </alternativeName>
</protein>
<feature type="chain" id="PRO_0000100800" description="Phosphoribosylaminoimidazole-succinocarboxamide synthase">
    <location>
        <begin position="1"/>
        <end position="237"/>
    </location>
</feature>
<reference key="1">
    <citation type="journal article" date="2000" name="Nucleic Acids Res.">
        <title>Complete genome sequence of the alkaliphilic bacterium Bacillus halodurans and genomic sequence comparison with Bacillus subtilis.</title>
        <authorList>
            <person name="Takami H."/>
            <person name="Nakasone K."/>
            <person name="Takaki Y."/>
            <person name="Maeno G."/>
            <person name="Sasaki R."/>
            <person name="Masui N."/>
            <person name="Fuji F."/>
            <person name="Hirama C."/>
            <person name="Nakamura Y."/>
            <person name="Ogasawara N."/>
            <person name="Kuhara S."/>
            <person name="Horikoshi K."/>
        </authorList>
    </citation>
    <scope>NUCLEOTIDE SEQUENCE [LARGE SCALE GENOMIC DNA]</scope>
    <source>
        <strain>ATCC BAA-125 / DSM 18197 / FERM 7344 / JCM 9153 / C-125</strain>
    </source>
</reference>
<accession>Q9KF60</accession>